<proteinExistence type="inferred from homology"/>
<accession>Q83MC1</accession>
<accession>Q7C361</accession>
<dbReference type="EC" id="3.1.2.6" evidence="1"/>
<dbReference type="EMBL" id="AE005674">
    <property type="protein sequence ID" value="AAN41860.1"/>
    <property type="molecule type" value="Genomic_DNA"/>
</dbReference>
<dbReference type="EMBL" id="AE014073">
    <property type="protein sequence ID" value="AAP15740.1"/>
    <property type="molecule type" value="Genomic_DNA"/>
</dbReference>
<dbReference type="RefSeq" id="NP_706153.1">
    <property type="nucleotide sequence ID" value="NC_004337.2"/>
</dbReference>
<dbReference type="RefSeq" id="WP_001052754.1">
    <property type="nucleotide sequence ID" value="NZ_WPGW01000097.1"/>
</dbReference>
<dbReference type="SMR" id="Q83MC1"/>
<dbReference type="STRING" id="198214.SF0198"/>
<dbReference type="PaxDb" id="198214-SF0198"/>
<dbReference type="GeneID" id="1024396"/>
<dbReference type="KEGG" id="sfl:SF0198"/>
<dbReference type="KEGG" id="sfx:S0206"/>
<dbReference type="PATRIC" id="fig|198214.7.peg.221"/>
<dbReference type="HOGENOM" id="CLU_030571_4_1_6"/>
<dbReference type="UniPathway" id="UPA00619">
    <property type="reaction ID" value="UER00676"/>
</dbReference>
<dbReference type="Proteomes" id="UP000001006">
    <property type="component" value="Chromosome"/>
</dbReference>
<dbReference type="Proteomes" id="UP000002673">
    <property type="component" value="Chromosome"/>
</dbReference>
<dbReference type="GO" id="GO:0004416">
    <property type="term" value="F:hydroxyacylglutathione hydrolase activity"/>
    <property type="evidence" value="ECO:0007669"/>
    <property type="project" value="UniProtKB-UniRule"/>
</dbReference>
<dbReference type="GO" id="GO:0046872">
    <property type="term" value="F:metal ion binding"/>
    <property type="evidence" value="ECO:0007669"/>
    <property type="project" value="UniProtKB-KW"/>
</dbReference>
<dbReference type="GO" id="GO:0019243">
    <property type="term" value="P:methylglyoxal catabolic process to D-lactate via S-lactoyl-glutathione"/>
    <property type="evidence" value="ECO:0007669"/>
    <property type="project" value="InterPro"/>
</dbReference>
<dbReference type="CDD" id="cd07723">
    <property type="entry name" value="hydroxyacylglutathione_hydrolase_MBL-fold"/>
    <property type="match status" value="1"/>
</dbReference>
<dbReference type="Gene3D" id="3.60.15.10">
    <property type="entry name" value="Ribonuclease Z/Hydroxyacylglutathione hydrolase-like"/>
    <property type="match status" value="1"/>
</dbReference>
<dbReference type="HAMAP" id="MF_01374">
    <property type="entry name" value="Glyoxalase_2"/>
    <property type="match status" value="1"/>
</dbReference>
<dbReference type="InterPro" id="IPR035680">
    <property type="entry name" value="Clx_II_MBL"/>
</dbReference>
<dbReference type="InterPro" id="IPR050110">
    <property type="entry name" value="Glyoxalase_II_hydrolase"/>
</dbReference>
<dbReference type="InterPro" id="IPR032282">
    <property type="entry name" value="HAGH_C"/>
</dbReference>
<dbReference type="InterPro" id="IPR017782">
    <property type="entry name" value="Hydroxyacylglutathione_Hdrlase"/>
</dbReference>
<dbReference type="InterPro" id="IPR001279">
    <property type="entry name" value="Metallo-B-lactamas"/>
</dbReference>
<dbReference type="InterPro" id="IPR036866">
    <property type="entry name" value="RibonucZ/Hydroxyglut_hydro"/>
</dbReference>
<dbReference type="NCBIfam" id="TIGR03413">
    <property type="entry name" value="GSH_gloB"/>
    <property type="match status" value="1"/>
</dbReference>
<dbReference type="NCBIfam" id="NF007597">
    <property type="entry name" value="PRK10241.1"/>
    <property type="match status" value="1"/>
</dbReference>
<dbReference type="PANTHER" id="PTHR43705">
    <property type="entry name" value="HYDROXYACYLGLUTATHIONE HYDROLASE"/>
    <property type="match status" value="1"/>
</dbReference>
<dbReference type="PANTHER" id="PTHR43705:SF1">
    <property type="entry name" value="HYDROXYACYLGLUTATHIONE HYDROLASE GLOB"/>
    <property type="match status" value="1"/>
</dbReference>
<dbReference type="Pfam" id="PF16123">
    <property type="entry name" value="HAGH_C"/>
    <property type="match status" value="1"/>
</dbReference>
<dbReference type="Pfam" id="PF00753">
    <property type="entry name" value="Lactamase_B"/>
    <property type="match status" value="1"/>
</dbReference>
<dbReference type="PIRSF" id="PIRSF005457">
    <property type="entry name" value="Glx"/>
    <property type="match status" value="1"/>
</dbReference>
<dbReference type="SMART" id="SM00849">
    <property type="entry name" value="Lactamase_B"/>
    <property type="match status" value="1"/>
</dbReference>
<dbReference type="SUPFAM" id="SSF56281">
    <property type="entry name" value="Metallo-hydrolase/oxidoreductase"/>
    <property type="match status" value="1"/>
</dbReference>
<feature type="chain" id="PRO_0000309707" description="Hydroxyacylglutathione hydrolase">
    <location>
        <begin position="1"/>
        <end position="251"/>
    </location>
</feature>
<feature type="binding site" evidence="1">
    <location>
        <position position="53"/>
    </location>
    <ligand>
        <name>Zn(2+)</name>
        <dbReference type="ChEBI" id="CHEBI:29105"/>
        <label>1</label>
    </ligand>
</feature>
<feature type="binding site" evidence="1">
    <location>
        <position position="55"/>
    </location>
    <ligand>
        <name>Zn(2+)</name>
        <dbReference type="ChEBI" id="CHEBI:29105"/>
        <label>1</label>
    </ligand>
</feature>
<feature type="binding site" evidence="1">
    <location>
        <position position="57"/>
    </location>
    <ligand>
        <name>Zn(2+)</name>
        <dbReference type="ChEBI" id="CHEBI:29105"/>
        <label>2</label>
    </ligand>
</feature>
<feature type="binding site" evidence="1">
    <location>
        <position position="58"/>
    </location>
    <ligand>
        <name>Zn(2+)</name>
        <dbReference type="ChEBI" id="CHEBI:29105"/>
        <label>2</label>
    </ligand>
</feature>
<feature type="binding site" evidence="1">
    <location>
        <position position="110"/>
    </location>
    <ligand>
        <name>Zn(2+)</name>
        <dbReference type="ChEBI" id="CHEBI:29105"/>
        <label>1</label>
    </ligand>
</feature>
<feature type="binding site" evidence="1">
    <location>
        <position position="127"/>
    </location>
    <ligand>
        <name>Zn(2+)</name>
        <dbReference type="ChEBI" id="CHEBI:29105"/>
        <label>1</label>
    </ligand>
</feature>
<feature type="binding site" evidence="1">
    <location>
        <position position="127"/>
    </location>
    <ligand>
        <name>Zn(2+)</name>
        <dbReference type="ChEBI" id="CHEBI:29105"/>
        <label>2</label>
    </ligand>
</feature>
<feature type="binding site" evidence="1">
    <location>
        <position position="165"/>
    </location>
    <ligand>
        <name>Zn(2+)</name>
        <dbReference type="ChEBI" id="CHEBI:29105"/>
        <label>2</label>
    </ligand>
</feature>
<evidence type="ECO:0000255" key="1">
    <source>
        <dbReference type="HAMAP-Rule" id="MF_01374"/>
    </source>
</evidence>
<gene>
    <name evidence="1" type="primary">gloB</name>
    <name type="ordered locus">SF0198</name>
    <name type="ordered locus">S0206</name>
</gene>
<comment type="function">
    <text evidence="1">Thiolesterase that catalyzes the hydrolysis of S-D-lactoyl-glutathione to form glutathione and D-lactic acid.</text>
</comment>
<comment type="catalytic activity">
    <reaction evidence="1">
        <text>an S-(2-hydroxyacyl)glutathione + H2O = a 2-hydroxy carboxylate + glutathione + H(+)</text>
        <dbReference type="Rhea" id="RHEA:21864"/>
        <dbReference type="ChEBI" id="CHEBI:15377"/>
        <dbReference type="ChEBI" id="CHEBI:15378"/>
        <dbReference type="ChEBI" id="CHEBI:57925"/>
        <dbReference type="ChEBI" id="CHEBI:58896"/>
        <dbReference type="ChEBI" id="CHEBI:71261"/>
        <dbReference type="EC" id="3.1.2.6"/>
    </reaction>
</comment>
<comment type="cofactor">
    <cofactor evidence="1">
        <name>Zn(2+)</name>
        <dbReference type="ChEBI" id="CHEBI:29105"/>
    </cofactor>
    <text evidence="1">Binds 2 Zn(2+) ions per subunit.</text>
</comment>
<comment type="pathway">
    <text evidence="1">Secondary metabolite metabolism; methylglyoxal degradation; (R)-lactate from methylglyoxal: step 2/2.</text>
</comment>
<comment type="subunit">
    <text evidence="1">Monomer.</text>
</comment>
<comment type="similarity">
    <text evidence="1">Belongs to the metallo-beta-lactamase superfamily. Glyoxalase II family.</text>
</comment>
<protein>
    <recommendedName>
        <fullName evidence="1">Hydroxyacylglutathione hydrolase</fullName>
        <ecNumber evidence="1">3.1.2.6</ecNumber>
    </recommendedName>
    <alternativeName>
        <fullName evidence="1">Glyoxalase II</fullName>
        <shortName evidence="1">Glx II</shortName>
    </alternativeName>
</protein>
<keyword id="KW-0378">Hydrolase</keyword>
<keyword id="KW-0479">Metal-binding</keyword>
<keyword id="KW-1185">Reference proteome</keyword>
<keyword id="KW-0862">Zinc</keyword>
<reference key="1">
    <citation type="journal article" date="2002" name="Nucleic Acids Res.">
        <title>Genome sequence of Shigella flexneri 2a: insights into pathogenicity through comparison with genomes of Escherichia coli K12 and O157.</title>
        <authorList>
            <person name="Jin Q."/>
            <person name="Yuan Z."/>
            <person name="Xu J."/>
            <person name="Wang Y."/>
            <person name="Shen Y."/>
            <person name="Lu W."/>
            <person name="Wang J."/>
            <person name="Liu H."/>
            <person name="Yang J."/>
            <person name="Yang F."/>
            <person name="Zhang X."/>
            <person name="Zhang J."/>
            <person name="Yang G."/>
            <person name="Wu H."/>
            <person name="Qu D."/>
            <person name="Dong J."/>
            <person name="Sun L."/>
            <person name="Xue Y."/>
            <person name="Zhao A."/>
            <person name="Gao Y."/>
            <person name="Zhu J."/>
            <person name="Kan B."/>
            <person name="Ding K."/>
            <person name="Chen S."/>
            <person name="Cheng H."/>
            <person name="Yao Z."/>
            <person name="He B."/>
            <person name="Chen R."/>
            <person name="Ma D."/>
            <person name="Qiang B."/>
            <person name="Wen Y."/>
            <person name="Hou Y."/>
            <person name="Yu J."/>
        </authorList>
    </citation>
    <scope>NUCLEOTIDE SEQUENCE [LARGE SCALE GENOMIC DNA]</scope>
    <source>
        <strain>301 / Serotype 2a</strain>
    </source>
</reference>
<reference key="2">
    <citation type="journal article" date="2003" name="Infect. Immun.">
        <title>Complete genome sequence and comparative genomics of Shigella flexneri serotype 2a strain 2457T.</title>
        <authorList>
            <person name="Wei J."/>
            <person name="Goldberg M.B."/>
            <person name="Burland V."/>
            <person name="Venkatesan M.M."/>
            <person name="Deng W."/>
            <person name="Fournier G."/>
            <person name="Mayhew G.F."/>
            <person name="Plunkett G. III"/>
            <person name="Rose D.J."/>
            <person name="Darling A."/>
            <person name="Mau B."/>
            <person name="Perna N.T."/>
            <person name="Payne S.M."/>
            <person name="Runyen-Janecky L.J."/>
            <person name="Zhou S."/>
            <person name="Schwartz D.C."/>
            <person name="Blattner F.R."/>
        </authorList>
    </citation>
    <scope>NUCLEOTIDE SEQUENCE [LARGE SCALE GENOMIC DNA]</scope>
    <source>
        <strain>ATCC 700930 / 2457T / Serotype 2a</strain>
    </source>
</reference>
<organism>
    <name type="scientific">Shigella flexneri</name>
    <dbReference type="NCBI Taxonomy" id="623"/>
    <lineage>
        <taxon>Bacteria</taxon>
        <taxon>Pseudomonadati</taxon>
        <taxon>Pseudomonadota</taxon>
        <taxon>Gammaproteobacteria</taxon>
        <taxon>Enterobacterales</taxon>
        <taxon>Enterobacteriaceae</taxon>
        <taxon>Shigella</taxon>
    </lineage>
</organism>
<name>GLO2_SHIFL</name>
<sequence>MNLNSIPAFDDNYIWVLNDEAGRCLIVDPGDAEPVLNAITANNWQPEAIFLTHHHHDHVGGVKELVEKFPQIVVYGPQETQDKGTTQVVKDGETAFVLGHEFSVITTPGHTLGHICYFSKPYLFCGDTLFSGGCGRLFEGTALQMYQSLKKLSALPDDTLVCCAHEYTLSNMKFALSIFPHDLSINDYYRKVKELRAKNQITLPVILKNERQINVFLRTEDIDLINGINEETLLQQPEERFAWLRSKKDRF</sequence>